<sequence>MFGDRQRPMVLVLGLGESGLAIARWCARHGCRLRIADTREAPPNLAALQAEGIDAEFVGGAFTPALLDGGVEIVGLSPGLSPLEPALAALVAAANERGVAVWGELEFFAQALRALGTSGYQPKVLAITGTNGKTTTTSLTGLLCQRSGKKVAVAGNISPAMLDRLASAIDETALPDVWVLELSSFQLETARTFAPDAAAILNITQDHLDWHGSFDAYAQAKGRIFGATTTRVLNRDDAAVMKFAPAVAAADAPRTVTFGLNEPTQDGDYGLSRDNGIAWLVEAVDRDAPDEATTTRRRKRDAAHTPDIAQKRLMPADALRIRGLHNAANALAAFALARAIDLPAAPLLHALREYRGEAHRVEVIATIDDVDYVDDSKGTNVGATVAALDGLAQKIVLIAGGDGKGQDFAPLVAPVARWCRAVMLIGRDAPVIRDTLAETGVPLADHATLEAAVHAAAELAEPGDAVLLSPACASLDMFRNYAHRAEVFRAAVDAIAIDKGATP</sequence>
<gene>
    <name evidence="1" type="primary">murD</name>
    <name type="ordered locus">Bcen2424_0557</name>
</gene>
<proteinExistence type="inferred from homology"/>
<reference key="1">
    <citation type="submission" date="2006-08" db="EMBL/GenBank/DDBJ databases">
        <title>Complete sequence of chromosome 1 of Burkholderia cenocepacia HI2424.</title>
        <authorList>
            <person name="Copeland A."/>
            <person name="Lucas S."/>
            <person name="Lapidus A."/>
            <person name="Barry K."/>
            <person name="Detter J.C."/>
            <person name="Glavina del Rio T."/>
            <person name="Hammon N."/>
            <person name="Israni S."/>
            <person name="Pitluck S."/>
            <person name="Chain P."/>
            <person name="Malfatti S."/>
            <person name="Shin M."/>
            <person name="Vergez L."/>
            <person name="Schmutz J."/>
            <person name="Larimer F."/>
            <person name="Land M."/>
            <person name="Hauser L."/>
            <person name="Kyrpides N."/>
            <person name="Kim E."/>
            <person name="LiPuma J.J."/>
            <person name="Gonzalez C.F."/>
            <person name="Konstantinidis K."/>
            <person name="Tiedje J.M."/>
            <person name="Richardson P."/>
        </authorList>
    </citation>
    <scope>NUCLEOTIDE SEQUENCE [LARGE SCALE GENOMIC DNA]</scope>
    <source>
        <strain>HI2424</strain>
    </source>
</reference>
<organism>
    <name type="scientific">Burkholderia cenocepacia (strain HI2424)</name>
    <dbReference type="NCBI Taxonomy" id="331272"/>
    <lineage>
        <taxon>Bacteria</taxon>
        <taxon>Pseudomonadati</taxon>
        <taxon>Pseudomonadota</taxon>
        <taxon>Betaproteobacteria</taxon>
        <taxon>Burkholderiales</taxon>
        <taxon>Burkholderiaceae</taxon>
        <taxon>Burkholderia</taxon>
        <taxon>Burkholderia cepacia complex</taxon>
    </lineage>
</organism>
<accession>A0K484</accession>
<name>MURD_BURCH</name>
<protein>
    <recommendedName>
        <fullName evidence="1">UDP-N-acetylmuramoylalanine--D-glutamate ligase</fullName>
        <ecNumber evidence="1">6.3.2.9</ecNumber>
    </recommendedName>
    <alternativeName>
        <fullName evidence="1">D-glutamic acid-adding enzyme</fullName>
    </alternativeName>
    <alternativeName>
        <fullName evidence="1">UDP-N-acetylmuramoyl-L-alanyl-D-glutamate synthetase</fullName>
    </alternativeName>
</protein>
<comment type="function">
    <text evidence="1">Cell wall formation. Catalyzes the addition of glutamate to the nucleotide precursor UDP-N-acetylmuramoyl-L-alanine (UMA).</text>
</comment>
<comment type="catalytic activity">
    <reaction evidence="1">
        <text>UDP-N-acetyl-alpha-D-muramoyl-L-alanine + D-glutamate + ATP = UDP-N-acetyl-alpha-D-muramoyl-L-alanyl-D-glutamate + ADP + phosphate + H(+)</text>
        <dbReference type="Rhea" id="RHEA:16429"/>
        <dbReference type="ChEBI" id="CHEBI:15378"/>
        <dbReference type="ChEBI" id="CHEBI:29986"/>
        <dbReference type="ChEBI" id="CHEBI:30616"/>
        <dbReference type="ChEBI" id="CHEBI:43474"/>
        <dbReference type="ChEBI" id="CHEBI:83898"/>
        <dbReference type="ChEBI" id="CHEBI:83900"/>
        <dbReference type="ChEBI" id="CHEBI:456216"/>
        <dbReference type="EC" id="6.3.2.9"/>
    </reaction>
</comment>
<comment type="pathway">
    <text evidence="1">Cell wall biogenesis; peptidoglycan biosynthesis.</text>
</comment>
<comment type="subcellular location">
    <subcellularLocation>
        <location evidence="1">Cytoplasm</location>
    </subcellularLocation>
</comment>
<comment type="similarity">
    <text evidence="1">Belongs to the MurCDEF family.</text>
</comment>
<keyword id="KW-0067">ATP-binding</keyword>
<keyword id="KW-0131">Cell cycle</keyword>
<keyword id="KW-0132">Cell division</keyword>
<keyword id="KW-0133">Cell shape</keyword>
<keyword id="KW-0961">Cell wall biogenesis/degradation</keyword>
<keyword id="KW-0963">Cytoplasm</keyword>
<keyword id="KW-0436">Ligase</keyword>
<keyword id="KW-0547">Nucleotide-binding</keyword>
<keyword id="KW-0573">Peptidoglycan synthesis</keyword>
<dbReference type="EC" id="6.3.2.9" evidence="1"/>
<dbReference type="EMBL" id="CP000458">
    <property type="protein sequence ID" value="ABK07311.1"/>
    <property type="molecule type" value="Genomic_DNA"/>
</dbReference>
<dbReference type="RefSeq" id="WP_011544499.1">
    <property type="nucleotide sequence ID" value="NC_008542.1"/>
</dbReference>
<dbReference type="SMR" id="A0K484"/>
<dbReference type="KEGG" id="bch:Bcen2424_0557"/>
<dbReference type="HOGENOM" id="CLU_032540_1_1_4"/>
<dbReference type="UniPathway" id="UPA00219"/>
<dbReference type="GO" id="GO:0005737">
    <property type="term" value="C:cytoplasm"/>
    <property type="evidence" value="ECO:0007669"/>
    <property type="project" value="UniProtKB-SubCell"/>
</dbReference>
<dbReference type="GO" id="GO:0005524">
    <property type="term" value="F:ATP binding"/>
    <property type="evidence" value="ECO:0007669"/>
    <property type="project" value="UniProtKB-UniRule"/>
</dbReference>
<dbReference type="GO" id="GO:0008764">
    <property type="term" value="F:UDP-N-acetylmuramoylalanine-D-glutamate ligase activity"/>
    <property type="evidence" value="ECO:0007669"/>
    <property type="project" value="UniProtKB-UniRule"/>
</dbReference>
<dbReference type="GO" id="GO:0051301">
    <property type="term" value="P:cell division"/>
    <property type="evidence" value="ECO:0007669"/>
    <property type="project" value="UniProtKB-KW"/>
</dbReference>
<dbReference type="GO" id="GO:0071555">
    <property type="term" value="P:cell wall organization"/>
    <property type="evidence" value="ECO:0007669"/>
    <property type="project" value="UniProtKB-KW"/>
</dbReference>
<dbReference type="GO" id="GO:0009252">
    <property type="term" value="P:peptidoglycan biosynthetic process"/>
    <property type="evidence" value="ECO:0007669"/>
    <property type="project" value="UniProtKB-UniRule"/>
</dbReference>
<dbReference type="GO" id="GO:0008360">
    <property type="term" value="P:regulation of cell shape"/>
    <property type="evidence" value="ECO:0007669"/>
    <property type="project" value="UniProtKB-KW"/>
</dbReference>
<dbReference type="Gene3D" id="3.90.190.20">
    <property type="entry name" value="Mur ligase, C-terminal domain"/>
    <property type="match status" value="1"/>
</dbReference>
<dbReference type="Gene3D" id="3.40.1190.10">
    <property type="entry name" value="Mur-like, catalytic domain"/>
    <property type="match status" value="1"/>
</dbReference>
<dbReference type="Gene3D" id="3.40.50.720">
    <property type="entry name" value="NAD(P)-binding Rossmann-like Domain"/>
    <property type="match status" value="1"/>
</dbReference>
<dbReference type="HAMAP" id="MF_00639">
    <property type="entry name" value="MurD"/>
    <property type="match status" value="1"/>
</dbReference>
<dbReference type="InterPro" id="IPR036565">
    <property type="entry name" value="Mur-like_cat_sf"/>
</dbReference>
<dbReference type="InterPro" id="IPR004101">
    <property type="entry name" value="Mur_ligase_C"/>
</dbReference>
<dbReference type="InterPro" id="IPR036615">
    <property type="entry name" value="Mur_ligase_C_dom_sf"/>
</dbReference>
<dbReference type="InterPro" id="IPR013221">
    <property type="entry name" value="Mur_ligase_cen"/>
</dbReference>
<dbReference type="InterPro" id="IPR005762">
    <property type="entry name" value="MurD"/>
</dbReference>
<dbReference type="NCBIfam" id="TIGR01087">
    <property type="entry name" value="murD"/>
    <property type="match status" value="1"/>
</dbReference>
<dbReference type="PANTHER" id="PTHR43692">
    <property type="entry name" value="UDP-N-ACETYLMURAMOYLALANINE--D-GLUTAMATE LIGASE"/>
    <property type="match status" value="1"/>
</dbReference>
<dbReference type="PANTHER" id="PTHR43692:SF1">
    <property type="entry name" value="UDP-N-ACETYLMURAMOYLALANINE--D-GLUTAMATE LIGASE"/>
    <property type="match status" value="1"/>
</dbReference>
<dbReference type="Pfam" id="PF02875">
    <property type="entry name" value="Mur_ligase_C"/>
    <property type="match status" value="1"/>
</dbReference>
<dbReference type="Pfam" id="PF08245">
    <property type="entry name" value="Mur_ligase_M"/>
    <property type="match status" value="1"/>
</dbReference>
<dbReference type="Pfam" id="PF21799">
    <property type="entry name" value="MurD-like_N"/>
    <property type="match status" value="1"/>
</dbReference>
<dbReference type="SUPFAM" id="SSF51984">
    <property type="entry name" value="MurCD N-terminal domain"/>
    <property type="match status" value="1"/>
</dbReference>
<dbReference type="SUPFAM" id="SSF53623">
    <property type="entry name" value="MurD-like peptide ligases, catalytic domain"/>
    <property type="match status" value="1"/>
</dbReference>
<dbReference type="SUPFAM" id="SSF53244">
    <property type="entry name" value="MurD-like peptide ligases, peptide-binding domain"/>
    <property type="match status" value="1"/>
</dbReference>
<evidence type="ECO:0000255" key="1">
    <source>
        <dbReference type="HAMAP-Rule" id="MF_00639"/>
    </source>
</evidence>
<feature type="chain" id="PRO_0000301417" description="UDP-N-acetylmuramoylalanine--D-glutamate ligase">
    <location>
        <begin position="1"/>
        <end position="503"/>
    </location>
</feature>
<feature type="binding site" evidence="1">
    <location>
        <begin position="129"/>
        <end position="135"/>
    </location>
    <ligand>
        <name>ATP</name>
        <dbReference type="ChEBI" id="CHEBI:30616"/>
    </ligand>
</feature>